<evidence type="ECO:0000255" key="1">
    <source>
        <dbReference type="HAMAP-Rule" id="MF_00142"/>
    </source>
</evidence>
<gene>
    <name evidence="1" type="primary">cyaY</name>
    <name type="ordered locus">ECS88_4230</name>
</gene>
<dbReference type="EMBL" id="CU928161">
    <property type="protein sequence ID" value="CAR05422.1"/>
    <property type="molecule type" value="Genomic_DNA"/>
</dbReference>
<dbReference type="RefSeq" id="WP_000999936.1">
    <property type="nucleotide sequence ID" value="NC_011742.1"/>
</dbReference>
<dbReference type="SMR" id="B7MH68"/>
<dbReference type="KEGG" id="ecz:ECS88_4230"/>
<dbReference type="HOGENOM" id="CLU_080880_3_0_6"/>
<dbReference type="Proteomes" id="UP000000747">
    <property type="component" value="Chromosome"/>
</dbReference>
<dbReference type="GO" id="GO:0005829">
    <property type="term" value="C:cytosol"/>
    <property type="evidence" value="ECO:0007669"/>
    <property type="project" value="TreeGrafter"/>
</dbReference>
<dbReference type="GO" id="GO:0008199">
    <property type="term" value="F:ferric iron binding"/>
    <property type="evidence" value="ECO:0007669"/>
    <property type="project" value="InterPro"/>
</dbReference>
<dbReference type="GO" id="GO:0008198">
    <property type="term" value="F:ferrous iron binding"/>
    <property type="evidence" value="ECO:0007669"/>
    <property type="project" value="TreeGrafter"/>
</dbReference>
<dbReference type="GO" id="GO:0016226">
    <property type="term" value="P:iron-sulfur cluster assembly"/>
    <property type="evidence" value="ECO:0007669"/>
    <property type="project" value="UniProtKB-UniRule"/>
</dbReference>
<dbReference type="CDD" id="cd00503">
    <property type="entry name" value="Frataxin"/>
    <property type="match status" value="1"/>
</dbReference>
<dbReference type="FunFam" id="3.30.920.10:FF:000001">
    <property type="entry name" value="Iron-sulfur cluster assembly protein CyaY"/>
    <property type="match status" value="1"/>
</dbReference>
<dbReference type="Gene3D" id="3.30.920.10">
    <property type="entry name" value="Frataxin/CyaY"/>
    <property type="match status" value="1"/>
</dbReference>
<dbReference type="HAMAP" id="MF_00142">
    <property type="entry name" value="CyaY"/>
    <property type="match status" value="1"/>
</dbReference>
<dbReference type="InterPro" id="IPR047584">
    <property type="entry name" value="CyaY"/>
</dbReference>
<dbReference type="InterPro" id="IPR002908">
    <property type="entry name" value="Frataxin/CyaY"/>
</dbReference>
<dbReference type="InterPro" id="IPR036524">
    <property type="entry name" value="Frataxin/CyaY_sf"/>
</dbReference>
<dbReference type="InterPro" id="IPR020895">
    <property type="entry name" value="Frataxin_CS"/>
</dbReference>
<dbReference type="NCBIfam" id="TIGR03421">
    <property type="entry name" value="FeS_CyaY"/>
    <property type="match status" value="1"/>
</dbReference>
<dbReference type="PANTHER" id="PTHR16821">
    <property type="entry name" value="FRATAXIN"/>
    <property type="match status" value="1"/>
</dbReference>
<dbReference type="PANTHER" id="PTHR16821:SF2">
    <property type="entry name" value="FRATAXIN, MITOCHONDRIAL"/>
    <property type="match status" value="1"/>
</dbReference>
<dbReference type="Pfam" id="PF01491">
    <property type="entry name" value="Frataxin_Cyay"/>
    <property type="match status" value="1"/>
</dbReference>
<dbReference type="SMART" id="SM01219">
    <property type="entry name" value="Frataxin_Cyay"/>
    <property type="match status" value="1"/>
</dbReference>
<dbReference type="SUPFAM" id="SSF55387">
    <property type="entry name" value="Frataxin/Nqo15-like"/>
    <property type="match status" value="1"/>
</dbReference>
<dbReference type="PROSITE" id="PS01344">
    <property type="entry name" value="FRATAXIN_1"/>
    <property type="match status" value="1"/>
</dbReference>
<dbReference type="PROSITE" id="PS50810">
    <property type="entry name" value="FRATAXIN_2"/>
    <property type="match status" value="1"/>
</dbReference>
<proteinExistence type="inferred from homology"/>
<comment type="function">
    <text evidence="1">Involved in iron-sulfur (Fe-S) cluster assembly. May act as a regulator of Fe-S biogenesis.</text>
</comment>
<comment type="similarity">
    <text evidence="1">Belongs to the frataxin family.</text>
</comment>
<protein>
    <recommendedName>
        <fullName evidence="1">Iron-sulfur cluster assembly protein CyaY</fullName>
    </recommendedName>
</protein>
<feature type="chain" id="PRO_1000117908" description="Iron-sulfur cluster assembly protein CyaY">
    <location>
        <begin position="1"/>
        <end position="106"/>
    </location>
</feature>
<name>CYAY_ECO45</name>
<organism>
    <name type="scientific">Escherichia coli O45:K1 (strain S88 / ExPEC)</name>
    <dbReference type="NCBI Taxonomy" id="585035"/>
    <lineage>
        <taxon>Bacteria</taxon>
        <taxon>Pseudomonadati</taxon>
        <taxon>Pseudomonadota</taxon>
        <taxon>Gammaproteobacteria</taxon>
        <taxon>Enterobacterales</taxon>
        <taxon>Enterobacteriaceae</taxon>
        <taxon>Escherichia</taxon>
    </lineage>
</organism>
<reference key="1">
    <citation type="journal article" date="2009" name="PLoS Genet.">
        <title>Organised genome dynamics in the Escherichia coli species results in highly diverse adaptive paths.</title>
        <authorList>
            <person name="Touchon M."/>
            <person name="Hoede C."/>
            <person name="Tenaillon O."/>
            <person name="Barbe V."/>
            <person name="Baeriswyl S."/>
            <person name="Bidet P."/>
            <person name="Bingen E."/>
            <person name="Bonacorsi S."/>
            <person name="Bouchier C."/>
            <person name="Bouvet O."/>
            <person name="Calteau A."/>
            <person name="Chiapello H."/>
            <person name="Clermont O."/>
            <person name="Cruveiller S."/>
            <person name="Danchin A."/>
            <person name="Diard M."/>
            <person name="Dossat C."/>
            <person name="Karoui M.E."/>
            <person name="Frapy E."/>
            <person name="Garry L."/>
            <person name="Ghigo J.M."/>
            <person name="Gilles A.M."/>
            <person name="Johnson J."/>
            <person name="Le Bouguenec C."/>
            <person name="Lescat M."/>
            <person name="Mangenot S."/>
            <person name="Martinez-Jehanne V."/>
            <person name="Matic I."/>
            <person name="Nassif X."/>
            <person name="Oztas S."/>
            <person name="Petit M.A."/>
            <person name="Pichon C."/>
            <person name="Rouy Z."/>
            <person name="Ruf C.S."/>
            <person name="Schneider D."/>
            <person name="Tourret J."/>
            <person name="Vacherie B."/>
            <person name="Vallenet D."/>
            <person name="Medigue C."/>
            <person name="Rocha E.P.C."/>
            <person name="Denamur E."/>
        </authorList>
    </citation>
    <scope>NUCLEOTIDE SEQUENCE [LARGE SCALE GENOMIC DNA]</scope>
    <source>
        <strain>S88 / ExPEC</strain>
    </source>
</reference>
<keyword id="KW-0408">Iron</keyword>
<keyword id="KW-0479">Metal-binding</keyword>
<keyword id="KW-1185">Reference proteome</keyword>
<sequence length="106" mass="12212">MNDSEFHRLADQLWLTIEEHLDDWDGDSDIDCEINGGVLTITFENGSKIIINRQEPLHQVWLATKQGGYHFDLKGDEWICDRSGETFWDLLEQAATQQAGETVSFR</sequence>
<accession>B7MH68</accession>